<organism>
    <name type="scientific">Alcanivorax borkumensis (strain ATCC 700651 / DSM 11573 / NCIMB 13689 / SK2)</name>
    <dbReference type="NCBI Taxonomy" id="393595"/>
    <lineage>
        <taxon>Bacteria</taxon>
        <taxon>Pseudomonadati</taxon>
        <taxon>Pseudomonadota</taxon>
        <taxon>Gammaproteobacteria</taxon>
        <taxon>Oceanospirillales</taxon>
        <taxon>Alcanivoracaceae</taxon>
        <taxon>Alcanivorax</taxon>
    </lineage>
</organism>
<keyword id="KW-1185">Reference proteome</keyword>
<keyword id="KW-0694">RNA-binding</keyword>
<keyword id="KW-0804">Transcription</keyword>
<keyword id="KW-0889">Transcription antitermination</keyword>
<keyword id="KW-0805">Transcription regulation</keyword>
<proteinExistence type="inferred from homology"/>
<gene>
    <name evidence="1" type="primary">nusB</name>
    <name type="ordered locus">ABO_2170</name>
</gene>
<comment type="function">
    <text evidence="1">Involved in transcription antitermination. Required for transcription of ribosomal RNA (rRNA) genes. Binds specifically to the boxA antiterminator sequence of the ribosomal RNA (rrn) operons.</text>
</comment>
<comment type="similarity">
    <text evidence="1">Belongs to the NusB family.</text>
</comment>
<dbReference type="EMBL" id="AM286690">
    <property type="protein sequence ID" value="CAL17618.1"/>
    <property type="molecule type" value="Genomic_DNA"/>
</dbReference>
<dbReference type="RefSeq" id="WP_011589448.1">
    <property type="nucleotide sequence ID" value="NC_008260.1"/>
</dbReference>
<dbReference type="SMR" id="Q0VMI0"/>
<dbReference type="STRING" id="393595.ABO_2170"/>
<dbReference type="KEGG" id="abo:ABO_2170"/>
<dbReference type="eggNOG" id="COG0781">
    <property type="taxonomic scope" value="Bacteria"/>
</dbReference>
<dbReference type="HOGENOM" id="CLU_087843_4_1_6"/>
<dbReference type="OrthoDB" id="9789556at2"/>
<dbReference type="Proteomes" id="UP000008871">
    <property type="component" value="Chromosome"/>
</dbReference>
<dbReference type="GO" id="GO:0005829">
    <property type="term" value="C:cytosol"/>
    <property type="evidence" value="ECO:0007669"/>
    <property type="project" value="TreeGrafter"/>
</dbReference>
<dbReference type="GO" id="GO:0003723">
    <property type="term" value="F:RNA binding"/>
    <property type="evidence" value="ECO:0007669"/>
    <property type="project" value="UniProtKB-UniRule"/>
</dbReference>
<dbReference type="GO" id="GO:0006353">
    <property type="term" value="P:DNA-templated transcription termination"/>
    <property type="evidence" value="ECO:0007669"/>
    <property type="project" value="UniProtKB-UniRule"/>
</dbReference>
<dbReference type="GO" id="GO:0031564">
    <property type="term" value="P:transcription antitermination"/>
    <property type="evidence" value="ECO:0007669"/>
    <property type="project" value="UniProtKB-KW"/>
</dbReference>
<dbReference type="CDD" id="cd00619">
    <property type="entry name" value="Terminator_NusB"/>
    <property type="match status" value="1"/>
</dbReference>
<dbReference type="FunFam" id="1.10.940.10:FF:000001">
    <property type="entry name" value="Transcription antitermination factor NusB"/>
    <property type="match status" value="1"/>
</dbReference>
<dbReference type="Gene3D" id="1.10.940.10">
    <property type="entry name" value="NusB-like"/>
    <property type="match status" value="1"/>
</dbReference>
<dbReference type="HAMAP" id="MF_00073">
    <property type="entry name" value="NusB"/>
    <property type="match status" value="1"/>
</dbReference>
<dbReference type="InterPro" id="IPR035926">
    <property type="entry name" value="NusB-like_sf"/>
</dbReference>
<dbReference type="InterPro" id="IPR011605">
    <property type="entry name" value="NusB_fam"/>
</dbReference>
<dbReference type="InterPro" id="IPR006027">
    <property type="entry name" value="NusB_RsmB_TIM44"/>
</dbReference>
<dbReference type="NCBIfam" id="TIGR01951">
    <property type="entry name" value="nusB"/>
    <property type="match status" value="1"/>
</dbReference>
<dbReference type="PANTHER" id="PTHR11078:SF3">
    <property type="entry name" value="ANTITERMINATION NUSB DOMAIN-CONTAINING PROTEIN"/>
    <property type="match status" value="1"/>
</dbReference>
<dbReference type="PANTHER" id="PTHR11078">
    <property type="entry name" value="N UTILIZATION SUBSTANCE PROTEIN B-RELATED"/>
    <property type="match status" value="1"/>
</dbReference>
<dbReference type="Pfam" id="PF01029">
    <property type="entry name" value="NusB"/>
    <property type="match status" value="1"/>
</dbReference>
<dbReference type="SUPFAM" id="SSF48013">
    <property type="entry name" value="NusB-like"/>
    <property type="match status" value="1"/>
</dbReference>
<protein>
    <recommendedName>
        <fullName evidence="1">Transcription antitermination protein NusB</fullName>
    </recommendedName>
    <alternativeName>
        <fullName evidence="1">Antitermination factor NusB</fullName>
    </alternativeName>
</protein>
<sequence>MNNPSTPSARRKARRFTLQALYQWQLAGAAVSDIEAQFLANQDFAKVDREYFHDLLHGVLGQVKTLDEQLTPYLDRRVEELSQVEKAILRLGAFELKERQDVPYRVVINEGIELAKVFGAEDSFKYVNGVLDKLARQLRYAEASERRPRD</sequence>
<accession>Q0VMI0</accession>
<feature type="chain" id="PRO_0000265476" description="Transcription antitermination protein NusB">
    <location>
        <begin position="1"/>
        <end position="150"/>
    </location>
</feature>
<reference key="1">
    <citation type="journal article" date="2006" name="Nat. Biotechnol.">
        <title>Genome sequence of the ubiquitous hydrocarbon-degrading marine bacterium Alcanivorax borkumensis.</title>
        <authorList>
            <person name="Schneiker S."/>
            <person name="Martins dos Santos V.A.P."/>
            <person name="Bartels D."/>
            <person name="Bekel T."/>
            <person name="Brecht M."/>
            <person name="Buhrmester J."/>
            <person name="Chernikova T.N."/>
            <person name="Denaro R."/>
            <person name="Ferrer M."/>
            <person name="Gertler C."/>
            <person name="Goesmann A."/>
            <person name="Golyshina O.V."/>
            <person name="Kaminski F."/>
            <person name="Khachane A.N."/>
            <person name="Lang S."/>
            <person name="Linke B."/>
            <person name="McHardy A.C."/>
            <person name="Meyer F."/>
            <person name="Nechitaylo T."/>
            <person name="Puehler A."/>
            <person name="Regenhardt D."/>
            <person name="Rupp O."/>
            <person name="Sabirova J.S."/>
            <person name="Selbitschka W."/>
            <person name="Yakimov M.M."/>
            <person name="Timmis K.N."/>
            <person name="Vorhoelter F.-J."/>
            <person name="Weidner S."/>
            <person name="Kaiser O."/>
            <person name="Golyshin P.N."/>
        </authorList>
    </citation>
    <scope>NUCLEOTIDE SEQUENCE [LARGE SCALE GENOMIC DNA]</scope>
    <source>
        <strain>ATCC 700651 / DSM 11573 / NCIMB 13689 / SK2</strain>
    </source>
</reference>
<name>NUSB_ALCBS</name>
<evidence type="ECO:0000255" key="1">
    <source>
        <dbReference type="HAMAP-Rule" id="MF_00073"/>
    </source>
</evidence>